<feature type="initiator methionine" description="Removed" evidence="1">
    <location>
        <position position="1"/>
    </location>
</feature>
<feature type="chain" id="PRO_0000135327" description="Glutamine--fructose-6-phosphate aminotransferase [isomerizing]">
    <location>
        <begin position="2"/>
        <end position="623"/>
    </location>
</feature>
<feature type="domain" description="Glutamine amidotransferase type-2" evidence="1">
    <location>
        <begin position="2"/>
        <end position="228"/>
    </location>
</feature>
<feature type="domain" description="SIS 1" evidence="1">
    <location>
        <begin position="295"/>
        <end position="435"/>
    </location>
</feature>
<feature type="domain" description="SIS 2" evidence="1">
    <location>
        <begin position="468"/>
        <end position="613"/>
    </location>
</feature>
<feature type="active site" description="Nucleophile; for GATase activity" evidence="1">
    <location>
        <position position="2"/>
    </location>
</feature>
<feature type="active site" description="For Fru-6P isomerization activity" evidence="1">
    <location>
        <position position="618"/>
    </location>
</feature>
<organism>
    <name type="scientific">Corynebacterium glutamicum (strain ATCC 13032 / DSM 20300 / JCM 1318 / BCRC 11384 / CCUG 27702 / LMG 3730 / NBRC 12168 / NCIMB 10025 / NRRL B-2784 / 534)</name>
    <dbReference type="NCBI Taxonomy" id="196627"/>
    <lineage>
        <taxon>Bacteria</taxon>
        <taxon>Bacillati</taxon>
        <taxon>Actinomycetota</taxon>
        <taxon>Actinomycetes</taxon>
        <taxon>Mycobacteriales</taxon>
        <taxon>Corynebacteriaceae</taxon>
        <taxon>Corynebacterium</taxon>
    </lineage>
</organism>
<gene>
    <name evidence="1" type="primary">glmS</name>
    <name type="ordered locus">Cgl2271</name>
    <name type="ordered locus">cg2492</name>
</gene>
<evidence type="ECO:0000255" key="1">
    <source>
        <dbReference type="HAMAP-Rule" id="MF_00164"/>
    </source>
</evidence>
<evidence type="ECO:0000305" key="2"/>
<name>GLMS_CORGL</name>
<comment type="function">
    <text evidence="1">Catalyzes the first step in hexosamine metabolism, converting fructose-6P into glucosamine-6P using glutamine as a nitrogen source.</text>
</comment>
<comment type="catalytic activity">
    <reaction evidence="1">
        <text>D-fructose 6-phosphate + L-glutamine = D-glucosamine 6-phosphate + L-glutamate</text>
        <dbReference type="Rhea" id="RHEA:13237"/>
        <dbReference type="ChEBI" id="CHEBI:29985"/>
        <dbReference type="ChEBI" id="CHEBI:58359"/>
        <dbReference type="ChEBI" id="CHEBI:58725"/>
        <dbReference type="ChEBI" id="CHEBI:61527"/>
        <dbReference type="EC" id="2.6.1.16"/>
    </reaction>
</comment>
<comment type="subunit">
    <text evidence="1">Homodimer.</text>
</comment>
<comment type="subcellular location">
    <subcellularLocation>
        <location evidence="1">Cytoplasm</location>
    </subcellularLocation>
</comment>
<comment type="sequence caution" evidence="2">
    <conflict type="erroneous initiation">
        <sequence resource="EMBL-CDS" id="CAF20613"/>
    </conflict>
</comment>
<accession>Q8NND3</accession>
<keyword id="KW-0032">Aminotransferase</keyword>
<keyword id="KW-0963">Cytoplasm</keyword>
<keyword id="KW-0315">Glutamine amidotransferase</keyword>
<keyword id="KW-1185">Reference proteome</keyword>
<keyword id="KW-0677">Repeat</keyword>
<keyword id="KW-0808">Transferase</keyword>
<dbReference type="EC" id="2.6.1.16" evidence="1"/>
<dbReference type="EMBL" id="BA000036">
    <property type="protein sequence ID" value="BAB99664.1"/>
    <property type="molecule type" value="Genomic_DNA"/>
</dbReference>
<dbReference type="EMBL" id="BX927154">
    <property type="protein sequence ID" value="CAF20613.1"/>
    <property type="status" value="ALT_INIT"/>
    <property type="molecule type" value="Genomic_DNA"/>
</dbReference>
<dbReference type="RefSeq" id="NP_601471.2">
    <property type="nucleotide sequence ID" value="NC_003450.3"/>
</dbReference>
<dbReference type="RefSeq" id="WP_011015000.1">
    <property type="nucleotide sequence ID" value="NC_006958.1"/>
</dbReference>
<dbReference type="SMR" id="Q8NND3"/>
<dbReference type="STRING" id="196627.cg2492"/>
<dbReference type="GeneID" id="1020224"/>
<dbReference type="KEGG" id="cgb:cg2492"/>
<dbReference type="KEGG" id="cgl:Cgl2271"/>
<dbReference type="PATRIC" id="fig|196627.13.peg.2204"/>
<dbReference type="eggNOG" id="COG0449">
    <property type="taxonomic scope" value="Bacteria"/>
</dbReference>
<dbReference type="HOGENOM" id="CLU_012520_5_2_11"/>
<dbReference type="OrthoDB" id="9761808at2"/>
<dbReference type="BioCyc" id="CORYNE:G18NG-11868-MONOMER"/>
<dbReference type="Proteomes" id="UP000000582">
    <property type="component" value="Chromosome"/>
</dbReference>
<dbReference type="Proteomes" id="UP000001009">
    <property type="component" value="Chromosome"/>
</dbReference>
<dbReference type="GO" id="GO:0005829">
    <property type="term" value="C:cytosol"/>
    <property type="evidence" value="ECO:0007669"/>
    <property type="project" value="TreeGrafter"/>
</dbReference>
<dbReference type="GO" id="GO:0097367">
    <property type="term" value="F:carbohydrate derivative binding"/>
    <property type="evidence" value="ECO:0007669"/>
    <property type="project" value="InterPro"/>
</dbReference>
<dbReference type="GO" id="GO:0004360">
    <property type="term" value="F:glutamine-fructose-6-phosphate transaminase (isomerizing) activity"/>
    <property type="evidence" value="ECO:0007669"/>
    <property type="project" value="UniProtKB-UniRule"/>
</dbReference>
<dbReference type="GO" id="GO:0005975">
    <property type="term" value="P:carbohydrate metabolic process"/>
    <property type="evidence" value="ECO:0007669"/>
    <property type="project" value="UniProtKB-UniRule"/>
</dbReference>
<dbReference type="GO" id="GO:0006002">
    <property type="term" value="P:fructose 6-phosphate metabolic process"/>
    <property type="evidence" value="ECO:0007669"/>
    <property type="project" value="TreeGrafter"/>
</dbReference>
<dbReference type="GO" id="GO:0006487">
    <property type="term" value="P:protein N-linked glycosylation"/>
    <property type="evidence" value="ECO:0007669"/>
    <property type="project" value="TreeGrafter"/>
</dbReference>
<dbReference type="GO" id="GO:0006047">
    <property type="term" value="P:UDP-N-acetylglucosamine metabolic process"/>
    <property type="evidence" value="ECO:0007669"/>
    <property type="project" value="TreeGrafter"/>
</dbReference>
<dbReference type="CDD" id="cd00714">
    <property type="entry name" value="GFAT"/>
    <property type="match status" value="1"/>
</dbReference>
<dbReference type="CDD" id="cd05008">
    <property type="entry name" value="SIS_GlmS_GlmD_1"/>
    <property type="match status" value="1"/>
</dbReference>
<dbReference type="CDD" id="cd05009">
    <property type="entry name" value="SIS_GlmS_GlmD_2"/>
    <property type="match status" value="1"/>
</dbReference>
<dbReference type="FunFam" id="3.40.50.10490:FF:000001">
    <property type="entry name" value="Glutamine--fructose-6-phosphate aminotransferase [isomerizing]"/>
    <property type="match status" value="1"/>
</dbReference>
<dbReference type="FunFam" id="3.60.20.10:FF:000006">
    <property type="entry name" value="Glutamine--fructose-6-phosphate aminotransferase [isomerizing]"/>
    <property type="match status" value="1"/>
</dbReference>
<dbReference type="Gene3D" id="3.40.50.10490">
    <property type="entry name" value="Glucose-6-phosphate isomerase like protein, domain 1"/>
    <property type="match status" value="2"/>
</dbReference>
<dbReference type="Gene3D" id="3.60.20.10">
    <property type="entry name" value="Glutamine Phosphoribosylpyrophosphate, subunit 1, domain 1"/>
    <property type="match status" value="1"/>
</dbReference>
<dbReference type="HAMAP" id="MF_00164">
    <property type="entry name" value="GlmS"/>
    <property type="match status" value="1"/>
</dbReference>
<dbReference type="InterPro" id="IPR017932">
    <property type="entry name" value="GATase_2_dom"/>
</dbReference>
<dbReference type="InterPro" id="IPR005855">
    <property type="entry name" value="GFAT"/>
</dbReference>
<dbReference type="InterPro" id="IPR047084">
    <property type="entry name" value="GFAT_N"/>
</dbReference>
<dbReference type="InterPro" id="IPR035466">
    <property type="entry name" value="GlmS/AgaS_SIS"/>
</dbReference>
<dbReference type="InterPro" id="IPR035490">
    <property type="entry name" value="GlmS/FrlB_SIS"/>
</dbReference>
<dbReference type="InterPro" id="IPR029055">
    <property type="entry name" value="Ntn_hydrolases_N"/>
</dbReference>
<dbReference type="InterPro" id="IPR001347">
    <property type="entry name" value="SIS_dom"/>
</dbReference>
<dbReference type="InterPro" id="IPR046348">
    <property type="entry name" value="SIS_dom_sf"/>
</dbReference>
<dbReference type="NCBIfam" id="TIGR01135">
    <property type="entry name" value="glmS"/>
    <property type="match status" value="1"/>
</dbReference>
<dbReference type="NCBIfam" id="NF001484">
    <property type="entry name" value="PRK00331.1"/>
    <property type="match status" value="1"/>
</dbReference>
<dbReference type="PANTHER" id="PTHR10937">
    <property type="entry name" value="GLUCOSAMINE--FRUCTOSE-6-PHOSPHATE AMINOTRANSFERASE, ISOMERIZING"/>
    <property type="match status" value="1"/>
</dbReference>
<dbReference type="PANTHER" id="PTHR10937:SF0">
    <property type="entry name" value="GLUTAMINE--FRUCTOSE-6-PHOSPHATE TRANSAMINASE (ISOMERIZING)"/>
    <property type="match status" value="1"/>
</dbReference>
<dbReference type="Pfam" id="PF13522">
    <property type="entry name" value="GATase_6"/>
    <property type="match status" value="1"/>
</dbReference>
<dbReference type="Pfam" id="PF01380">
    <property type="entry name" value="SIS"/>
    <property type="match status" value="2"/>
</dbReference>
<dbReference type="SUPFAM" id="SSF56235">
    <property type="entry name" value="N-terminal nucleophile aminohydrolases (Ntn hydrolases)"/>
    <property type="match status" value="1"/>
</dbReference>
<dbReference type="SUPFAM" id="SSF53697">
    <property type="entry name" value="SIS domain"/>
    <property type="match status" value="1"/>
</dbReference>
<dbReference type="PROSITE" id="PS51278">
    <property type="entry name" value="GATASE_TYPE_2"/>
    <property type="match status" value="1"/>
</dbReference>
<dbReference type="PROSITE" id="PS51464">
    <property type="entry name" value="SIS"/>
    <property type="match status" value="2"/>
</dbReference>
<protein>
    <recommendedName>
        <fullName evidence="1">Glutamine--fructose-6-phosphate aminotransferase [isomerizing]</fullName>
        <ecNumber evidence="1">2.6.1.16</ecNumber>
    </recommendedName>
    <alternativeName>
        <fullName evidence="1">D-fructose-6-phosphate amidotransferase</fullName>
    </alternativeName>
    <alternativeName>
        <fullName evidence="1">GFAT</fullName>
    </alternativeName>
    <alternativeName>
        <fullName evidence="1">Glucosamine-6-phosphate synthase</fullName>
    </alternativeName>
    <alternativeName>
        <fullName evidence="1">Hexosephosphate aminotransferase</fullName>
    </alternativeName>
    <alternativeName>
        <fullName evidence="1">L-glutamine--D-fructose-6-phosphate amidotransferase</fullName>
    </alternativeName>
</protein>
<sequence>MCGIVGYIGQAGDSRDYFALDVVVEGLRRLEYRGYDSAGIAIHANGEISYRKKAGKVAALDAEIAKAPLPDSILGIGHTRWATHGGPTDVNAHPHVVSNGKLAVVHNGIIENFAELRSELSAKGYNFVSDTDTEVAASLLAEIYNTQANGDLTLAMQLTGQRLEGAFTLLAIHADHDDRIVAARRNSPLVIGVGEGENFLGSDVSGFIDYTRKAVELANDQVVTITADDYAITNFDGSEAVGKPFDVEWDAAAAEKGGFGSFMEKEIHDQPAAVRDTLMGRLDEDGKLVLDELRIDEAILRSVDKIVIVACGTAAYAGQVARYAIEHWCRIPTEVELAHEFRYRDPILNEKTLVVALSQSGETMDTLMAVRHAREQGAKVVAICNTVGSTLPREADASLYTYAGPEIAVASTKAFLAQITASYLLGLYLAQLRGNKFADEVSSILDSLREMPEKIQQVIDAEEQIKKLGQDMADAKSVLFLGRHVGFPVALEGALKLKEIAYLHAEGFAAGELKHGPIALVEEGQPIFVIVPSPRGRDSLHSKVVSNIQEIRARGAVTIVIAEEGDEAVNDYANFIIRIPQAPTLMQPLLSTVPLQIFACAVATAKGYNVDQPRNLAKSVTVE</sequence>
<reference key="1">
    <citation type="journal article" date="2003" name="Appl. Microbiol. Biotechnol.">
        <title>The Corynebacterium glutamicum genome: features and impacts on biotechnological processes.</title>
        <authorList>
            <person name="Ikeda M."/>
            <person name="Nakagawa S."/>
        </authorList>
    </citation>
    <scope>NUCLEOTIDE SEQUENCE [LARGE SCALE GENOMIC DNA]</scope>
    <source>
        <strain>ATCC 13032 / DSM 20300 / JCM 1318 / BCRC 11384 / CCUG 27702 / LMG 3730 / NBRC 12168 / NCIMB 10025 / NRRL B-2784 / 534</strain>
    </source>
</reference>
<reference key="2">
    <citation type="journal article" date="2003" name="J. Biotechnol.">
        <title>The complete Corynebacterium glutamicum ATCC 13032 genome sequence and its impact on the production of L-aspartate-derived amino acids and vitamins.</title>
        <authorList>
            <person name="Kalinowski J."/>
            <person name="Bathe B."/>
            <person name="Bartels D."/>
            <person name="Bischoff N."/>
            <person name="Bott M."/>
            <person name="Burkovski A."/>
            <person name="Dusch N."/>
            <person name="Eggeling L."/>
            <person name="Eikmanns B.J."/>
            <person name="Gaigalat L."/>
            <person name="Goesmann A."/>
            <person name="Hartmann M."/>
            <person name="Huthmacher K."/>
            <person name="Kraemer R."/>
            <person name="Linke B."/>
            <person name="McHardy A.C."/>
            <person name="Meyer F."/>
            <person name="Moeckel B."/>
            <person name="Pfefferle W."/>
            <person name="Puehler A."/>
            <person name="Rey D.A."/>
            <person name="Rueckert C."/>
            <person name="Rupp O."/>
            <person name="Sahm H."/>
            <person name="Wendisch V.F."/>
            <person name="Wiegraebe I."/>
            <person name="Tauch A."/>
        </authorList>
    </citation>
    <scope>NUCLEOTIDE SEQUENCE [LARGE SCALE GENOMIC DNA]</scope>
    <source>
        <strain>ATCC 13032 / DSM 20300 / JCM 1318 / BCRC 11384 / CCUG 27702 / LMG 3730 / NBRC 12168 / NCIMB 10025 / NRRL B-2784 / 534</strain>
    </source>
</reference>
<proteinExistence type="inferred from homology"/>